<comment type="function">
    <text evidence="1">NQR complex catalyzes the reduction of ubiquinone-1 to ubiquinol by two successive reactions, coupled with the transport of Na(+) ions from the cytoplasm to the periplasm. The first step is catalyzed by NqrF, which accepts electrons from NADH and reduces ubiquinone-1 to ubisemiquinone by a one-electron transfer pathway.</text>
</comment>
<comment type="catalytic activity">
    <reaction evidence="1">
        <text>a ubiquinone + n Na(+)(in) + NADH + H(+) = a ubiquinol + n Na(+)(out) + NAD(+)</text>
        <dbReference type="Rhea" id="RHEA:47748"/>
        <dbReference type="Rhea" id="RHEA-COMP:9565"/>
        <dbReference type="Rhea" id="RHEA-COMP:9566"/>
        <dbReference type="ChEBI" id="CHEBI:15378"/>
        <dbReference type="ChEBI" id="CHEBI:16389"/>
        <dbReference type="ChEBI" id="CHEBI:17976"/>
        <dbReference type="ChEBI" id="CHEBI:29101"/>
        <dbReference type="ChEBI" id="CHEBI:57540"/>
        <dbReference type="ChEBI" id="CHEBI:57945"/>
        <dbReference type="EC" id="7.2.1.1"/>
    </reaction>
</comment>
<comment type="cofactor">
    <cofactor evidence="1">
        <name>[2Fe-2S] cluster</name>
        <dbReference type="ChEBI" id="CHEBI:190135"/>
    </cofactor>
    <text evidence="1">Binds 1 [2Fe-2S] cluster.</text>
</comment>
<comment type="cofactor">
    <cofactor evidence="1">
        <name>FAD</name>
        <dbReference type="ChEBI" id="CHEBI:57692"/>
    </cofactor>
</comment>
<comment type="subunit">
    <text evidence="1">Composed of six subunits; NqrA, NqrB, NqrC, NqrD, NqrE and NqrF.</text>
</comment>
<comment type="subcellular location">
    <subcellularLocation>
        <location evidence="1">Cell inner membrane</location>
        <topology evidence="1">Single-pass membrane protein</topology>
    </subcellularLocation>
</comment>
<comment type="similarity">
    <text evidence="1">Belongs to the NqrF family.</text>
</comment>
<name>NQRF_NEIM0</name>
<proteinExistence type="inferred from homology"/>
<evidence type="ECO:0000255" key="1">
    <source>
        <dbReference type="HAMAP-Rule" id="MF_00430"/>
    </source>
</evidence>
<organism>
    <name type="scientific">Neisseria meningitidis serogroup C (strain 053442)</name>
    <dbReference type="NCBI Taxonomy" id="374833"/>
    <lineage>
        <taxon>Bacteria</taxon>
        <taxon>Pseudomonadati</taxon>
        <taxon>Pseudomonadota</taxon>
        <taxon>Betaproteobacteria</taxon>
        <taxon>Neisseriales</taxon>
        <taxon>Neisseriaceae</taxon>
        <taxon>Neisseria</taxon>
    </lineage>
</organism>
<keyword id="KW-0001">2Fe-2S</keyword>
<keyword id="KW-0997">Cell inner membrane</keyword>
<keyword id="KW-1003">Cell membrane</keyword>
<keyword id="KW-0274">FAD</keyword>
<keyword id="KW-0285">Flavoprotein</keyword>
<keyword id="KW-0406">Ion transport</keyword>
<keyword id="KW-0408">Iron</keyword>
<keyword id="KW-0411">Iron-sulfur</keyword>
<keyword id="KW-0472">Membrane</keyword>
<keyword id="KW-0479">Metal-binding</keyword>
<keyword id="KW-0520">NAD</keyword>
<keyword id="KW-0915">Sodium</keyword>
<keyword id="KW-0739">Sodium transport</keyword>
<keyword id="KW-1278">Translocase</keyword>
<keyword id="KW-0812">Transmembrane</keyword>
<keyword id="KW-1133">Transmembrane helix</keyword>
<keyword id="KW-0813">Transport</keyword>
<keyword id="KW-0830">Ubiquinone</keyword>
<sequence>MEIILGIVMFTVIVLVLALMILFAKSKLVSEGDITIKVNGEKELTMPAGGKLLGALANEGIFIPSACGGGGSCGQCRVVVKSGGGDILPTELSHISKREAREGCRLSCQVNVKTDMDIEVPEEVFGVKKWECTVISNDNKATFIKELKLAIPEGEEVPFRAGGYIQIEAPPHTVAYKDFDIPEEYHEDWDKYNLWQYVSKVDEPILRAYSMASYPEEKGIIMLNVRIATPPPRVPDAPPGQMSSYIWSLKPGDKVTISGPFGEFFAKDTDAEMVFIGGGAGMAPMRSHIFDQLKRLNSKRKITFWYGARSKREMFYVEDFDQLAAEFPNFTWHVALSDPLPEDNWDGYTGFIHNVVYENHLKNHEAPEDCEFYMCGPPIMNQSVIKMLKDLGVEDENILLDDFGG</sequence>
<dbReference type="EC" id="7.2.1.1" evidence="1"/>
<dbReference type="EMBL" id="CP000381">
    <property type="protein sequence ID" value="ABX72710.1"/>
    <property type="molecule type" value="Genomic_DNA"/>
</dbReference>
<dbReference type="RefSeq" id="WP_002214365.1">
    <property type="nucleotide sequence ID" value="NC_010120.1"/>
</dbReference>
<dbReference type="SMR" id="A9M2A6"/>
<dbReference type="GeneID" id="93386621"/>
<dbReference type="KEGG" id="nmn:NMCC_0510"/>
<dbReference type="HOGENOM" id="CLU_003827_7_2_4"/>
<dbReference type="Proteomes" id="UP000001177">
    <property type="component" value="Chromosome"/>
</dbReference>
<dbReference type="GO" id="GO:0005886">
    <property type="term" value="C:plasma membrane"/>
    <property type="evidence" value="ECO:0007669"/>
    <property type="project" value="UniProtKB-SubCell"/>
</dbReference>
<dbReference type="GO" id="GO:0051537">
    <property type="term" value="F:2 iron, 2 sulfur cluster binding"/>
    <property type="evidence" value="ECO:0007669"/>
    <property type="project" value="UniProtKB-KW"/>
</dbReference>
<dbReference type="GO" id="GO:0009055">
    <property type="term" value="F:electron transfer activity"/>
    <property type="evidence" value="ECO:0007669"/>
    <property type="project" value="UniProtKB-UniRule"/>
</dbReference>
<dbReference type="GO" id="GO:0046872">
    <property type="term" value="F:metal ion binding"/>
    <property type="evidence" value="ECO:0007669"/>
    <property type="project" value="UniProtKB-KW"/>
</dbReference>
<dbReference type="GO" id="GO:0016655">
    <property type="term" value="F:oxidoreductase activity, acting on NAD(P)H, quinone or similar compound as acceptor"/>
    <property type="evidence" value="ECO:0007669"/>
    <property type="project" value="InterPro"/>
</dbReference>
<dbReference type="GO" id="GO:0006814">
    <property type="term" value="P:sodium ion transport"/>
    <property type="evidence" value="ECO:0007669"/>
    <property type="project" value="UniProtKB-UniRule"/>
</dbReference>
<dbReference type="CDD" id="cd06188">
    <property type="entry name" value="NADH_quinone_reductase"/>
    <property type="match status" value="1"/>
</dbReference>
<dbReference type="FunFam" id="2.40.30.10:FF:000064">
    <property type="entry name" value="Na(+)-translocating NADH-quinone reductase subunit F"/>
    <property type="match status" value="1"/>
</dbReference>
<dbReference type="FunFam" id="3.40.50.80:FF:000014">
    <property type="entry name" value="Na(+)-translocating NADH-quinone reductase subunit F"/>
    <property type="match status" value="1"/>
</dbReference>
<dbReference type="Gene3D" id="3.10.20.30">
    <property type="match status" value="1"/>
</dbReference>
<dbReference type="Gene3D" id="3.40.50.80">
    <property type="entry name" value="Nucleotide-binding domain of ferredoxin-NADP reductase (FNR) module"/>
    <property type="match status" value="1"/>
</dbReference>
<dbReference type="Gene3D" id="2.40.30.10">
    <property type="entry name" value="Translation factors"/>
    <property type="match status" value="1"/>
</dbReference>
<dbReference type="HAMAP" id="MF_00430">
    <property type="entry name" value="NqrF"/>
    <property type="match status" value="1"/>
</dbReference>
<dbReference type="InterPro" id="IPR036010">
    <property type="entry name" value="2Fe-2S_ferredoxin-like_sf"/>
</dbReference>
<dbReference type="InterPro" id="IPR001041">
    <property type="entry name" value="2Fe-2S_ferredoxin-type"/>
</dbReference>
<dbReference type="InterPro" id="IPR012675">
    <property type="entry name" value="Beta-grasp_dom_sf"/>
</dbReference>
<dbReference type="InterPro" id="IPR008333">
    <property type="entry name" value="Cbr1-like_FAD-bd_dom"/>
</dbReference>
<dbReference type="InterPro" id="IPR017927">
    <property type="entry name" value="FAD-bd_FR_type"/>
</dbReference>
<dbReference type="InterPro" id="IPR039261">
    <property type="entry name" value="FNR_nucleotide-bd"/>
</dbReference>
<dbReference type="InterPro" id="IPR010205">
    <property type="entry name" value="NqrF"/>
</dbReference>
<dbReference type="InterPro" id="IPR001433">
    <property type="entry name" value="OxRdtase_FAD/NAD-bd"/>
</dbReference>
<dbReference type="InterPro" id="IPR017938">
    <property type="entry name" value="Riboflavin_synthase-like_b-brl"/>
</dbReference>
<dbReference type="NCBIfam" id="TIGR01941">
    <property type="entry name" value="nqrF"/>
    <property type="match status" value="1"/>
</dbReference>
<dbReference type="PANTHER" id="PTHR43644">
    <property type="entry name" value="NA(+)-TRANSLOCATING NADH-QUINONE REDUCTASE SUBUNIT"/>
    <property type="match status" value="1"/>
</dbReference>
<dbReference type="PANTHER" id="PTHR43644:SF1">
    <property type="entry name" value="NAD(P)H-FLAVIN REDUCTASE"/>
    <property type="match status" value="1"/>
</dbReference>
<dbReference type="Pfam" id="PF00970">
    <property type="entry name" value="FAD_binding_6"/>
    <property type="match status" value="1"/>
</dbReference>
<dbReference type="Pfam" id="PF00111">
    <property type="entry name" value="Fer2"/>
    <property type="match status" value="1"/>
</dbReference>
<dbReference type="Pfam" id="PF00175">
    <property type="entry name" value="NAD_binding_1"/>
    <property type="match status" value="1"/>
</dbReference>
<dbReference type="PIRSF" id="PIRSF000044">
    <property type="entry name" value="Cis_Diol_DH_RD"/>
    <property type="match status" value="1"/>
</dbReference>
<dbReference type="SUPFAM" id="SSF54292">
    <property type="entry name" value="2Fe-2S ferredoxin-like"/>
    <property type="match status" value="1"/>
</dbReference>
<dbReference type="SUPFAM" id="SSF52343">
    <property type="entry name" value="Ferredoxin reductase-like, C-terminal NADP-linked domain"/>
    <property type="match status" value="1"/>
</dbReference>
<dbReference type="SUPFAM" id="SSF63380">
    <property type="entry name" value="Riboflavin synthase domain-like"/>
    <property type="match status" value="1"/>
</dbReference>
<dbReference type="PROSITE" id="PS51085">
    <property type="entry name" value="2FE2S_FER_2"/>
    <property type="match status" value="1"/>
</dbReference>
<dbReference type="PROSITE" id="PS51384">
    <property type="entry name" value="FAD_FR"/>
    <property type="match status" value="1"/>
</dbReference>
<accession>A9M2A6</accession>
<protein>
    <recommendedName>
        <fullName evidence="1">Na(+)-translocating NADH-quinone reductase subunit F</fullName>
        <shortName evidence="1">Na(+)-NQR subunit F</shortName>
        <shortName evidence="1">Na(+)-translocating NQR subunit F</shortName>
        <ecNumber evidence="1">7.2.1.1</ecNumber>
    </recommendedName>
    <alternativeName>
        <fullName evidence="1">NQR complex subunit F</fullName>
    </alternativeName>
    <alternativeName>
        <fullName evidence="1">NQR-1 subunit F</fullName>
    </alternativeName>
</protein>
<feature type="chain" id="PRO_1000080586" description="Na(+)-translocating NADH-quinone reductase subunit F">
    <location>
        <begin position="1"/>
        <end position="405"/>
    </location>
</feature>
<feature type="transmembrane region" description="Helical" evidence="1">
    <location>
        <begin position="3"/>
        <end position="23"/>
    </location>
</feature>
<feature type="domain" description="2Fe-2S ferredoxin-type" evidence="1">
    <location>
        <begin position="32"/>
        <end position="124"/>
    </location>
</feature>
<feature type="domain" description="FAD-binding FR-type" evidence="1">
    <location>
        <begin position="127"/>
        <end position="267"/>
    </location>
</feature>
<feature type="binding site" evidence="1">
    <location>
        <position position="67"/>
    </location>
    <ligand>
        <name>[2Fe-2S] cluster</name>
        <dbReference type="ChEBI" id="CHEBI:190135"/>
    </ligand>
</feature>
<feature type="binding site" evidence="1">
    <location>
        <position position="73"/>
    </location>
    <ligand>
        <name>[2Fe-2S] cluster</name>
        <dbReference type="ChEBI" id="CHEBI:190135"/>
    </ligand>
</feature>
<feature type="binding site" evidence="1">
    <location>
        <position position="76"/>
    </location>
    <ligand>
        <name>[2Fe-2S] cluster</name>
        <dbReference type="ChEBI" id="CHEBI:190135"/>
    </ligand>
</feature>
<feature type="binding site" evidence="1">
    <location>
        <position position="108"/>
    </location>
    <ligand>
        <name>[2Fe-2S] cluster</name>
        <dbReference type="ChEBI" id="CHEBI:190135"/>
    </ligand>
</feature>
<gene>
    <name evidence="1" type="primary">nqrF</name>
    <name type="ordered locus">NMCC_0510</name>
</gene>
<reference key="1">
    <citation type="journal article" date="2008" name="Genomics">
        <title>Characterization of ST-4821 complex, a unique Neisseria meningitidis clone.</title>
        <authorList>
            <person name="Peng J."/>
            <person name="Yang L."/>
            <person name="Yang F."/>
            <person name="Yang J."/>
            <person name="Yan Y."/>
            <person name="Nie H."/>
            <person name="Zhang X."/>
            <person name="Xiong Z."/>
            <person name="Jiang Y."/>
            <person name="Cheng F."/>
            <person name="Xu X."/>
            <person name="Chen S."/>
            <person name="Sun L."/>
            <person name="Li W."/>
            <person name="Shen Y."/>
            <person name="Shao Z."/>
            <person name="Liang X."/>
            <person name="Xu J."/>
            <person name="Jin Q."/>
        </authorList>
    </citation>
    <scope>NUCLEOTIDE SEQUENCE [LARGE SCALE GENOMIC DNA]</scope>
    <source>
        <strain>053442</strain>
    </source>
</reference>